<protein>
    <recommendedName>
        <fullName evidence="1">Probable 4-deoxy-4-formamido-L-arabinose-phosphoundecaprenol deformylase ArnD</fullName>
        <ecNumber evidence="1">3.5.1.n3</ecNumber>
    </recommendedName>
</protein>
<dbReference type="EC" id="3.5.1.n3" evidence="1"/>
<dbReference type="EMBL" id="CP000668">
    <property type="protein sequence ID" value="ABP39137.1"/>
    <property type="molecule type" value="Genomic_DNA"/>
</dbReference>
<dbReference type="RefSeq" id="WP_002211822.1">
    <property type="nucleotide sequence ID" value="NZ_CP009715.1"/>
</dbReference>
<dbReference type="SMR" id="A4TIM5"/>
<dbReference type="GeneID" id="57976258"/>
<dbReference type="KEGG" id="ypp:YPDSF_0731"/>
<dbReference type="PATRIC" id="fig|386656.14.peg.3138"/>
<dbReference type="UniPathway" id="UPA00030"/>
<dbReference type="UniPathway" id="UPA00036">
    <property type="reaction ID" value="UER00496"/>
</dbReference>
<dbReference type="GO" id="GO:0016020">
    <property type="term" value="C:membrane"/>
    <property type="evidence" value="ECO:0007669"/>
    <property type="project" value="GOC"/>
</dbReference>
<dbReference type="GO" id="GO:0016811">
    <property type="term" value="F:hydrolase activity, acting on carbon-nitrogen (but not peptide) bonds, in linear amides"/>
    <property type="evidence" value="ECO:0007669"/>
    <property type="project" value="UniProtKB-UniRule"/>
</dbReference>
<dbReference type="GO" id="GO:0036108">
    <property type="term" value="P:4-amino-4-deoxy-alpha-L-arabinopyranosyl undecaprenyl phosphate biosynthetic process"/>
    <property type="evidence" value="ECO:0007669"/>
    <property type="project" value="UniProtKB-UniRule"/>
</dbReference>
<dbReference type="GO" id="GO:0009245">
    <property type="term" value="P:lipid A biosynthetic process"/>
    <property type="evidence" value="ECO:0007669"/>
    <property type="project" value="UniProtKB-UniRule"/>
</dbReference>
<dbReference type="GO" id="GO:0009103">
    <property type="term" value="P:lipopolysaccharide biosynthetic process"/>
    <property type="evidence" value="ECO:0007669"/>
    <property type="project" value="UniProtKB-UniRule"/>
</dbReference>
<dbReference type="GO" id="GO:0046677">
    <property type="term" value="P:response to antibiotic"/>
    <property type="evidence" value="ECO:0007669"/>
    <property type="project" value="UniProtKB-KW"/>
</dbReference>
<dbReference type="CDD" id="cd10939">
    <property type="entry name" value="CE4_ArnD"/>
    <property type="match status" value="1"/>
</dbReference>
<dbReference type="Gene3D" id="3.20.20.370">
    <property type="entry name" value="Glycoside hydrolase/deacetylase"/>
    <property type="match status" value="1"/>
</dbReference>
<dbReference type="HAMAP" id="MF_01870">
    <property type="entry name" value="ArnD"/>
    <property type="match status" value="1"/>
</dbReference>
<dbReference type="InterPro" id="IPR023557">
    <property type="entry name" value="ArnD"/>
</dbReference>
<dbReference type="InterPro" id="IPR011330">
    <property type="entry name" value="Glyco_hydro/deAcase_b/a-brl"/>
</dbReference>
<dbReference type="InterPro" id="IPR002509">
    <property type="entry name" value="NODB_dom"/>
</dbReference>
<dbReference type="InterPro" id="IPR050248">
    <property type="entry name" value="Polysacc_deacetylase_ArnD"/>
</dbReference>
<dbReference type="NCBIfam" id="NF011923">
    <property type="entry name" value="PRK15394.1"/>
    <property type="match status" value="1"/>
</dbReference>
<dbReference type="PANTHER" id="PTHR10587:SF137">
    <property type="entry name" value="4-DEOXY-4-FORMAMIDO-L-ARABINOSE-PHOSPHOUNDECAPRENOL DEFORMYLASE ARND-RELATED"/>
    <property type="match status" value="1"/>
</dbReference>
<dbReference type="PANTHER" id="PTHR10587">
    <property type="entry name" value="GLYCOSYL TRANSFERASE-RELATED"/>
    <property type="match status" value="1"/>
</dbReference>
<dbReference type="Pfam" id="PF01522">
    <property type="entry name" value="Polysacc_deac_1"/>
    <property type="match status" value="1"/>
</dbReference>
<dbReference type="SUPFAM" id="SSF88713">
    <property type="entry name" value="Glycoside hydrolase/deacetylase"/>
    <property type="match status" value="1"/>
</dbReference>
<dbReference type="PROSITE" id="PS51677">
    <property type="entry name" value="NODB"/>
    <property type="match status" value="1"/>
</dbReference>
<organism>
    <name type="scientific">Yersinia pestis (strain Pestoides F)</name>
    <dbReference type="NCBI Taxonomy" id="386656"/>
    <lineage>
        <taxon>Bacteria</taxon>
        <taxon>Pseudomonadati</taxon>
        <taxon>Pseudomonadota</taxon>
        <taxon>Gammaproteobacteria</taxon>
        <taxon>Enterobacterales</taxon>
        <taxon>Yersiniaceae</taxon>
        <taxon>Yersinia</taxon>
    </lineage>
</organism>
<feature type="chain" id="PRO_0000383552" description="Probable 4-deoxy-4-formamido-L-arabinose-phosphoundecaprenol deformylase ArnD">
    <location>
        <begin position="1"/>
        <end position="301"/>
    </location>
</feature>
<feature type="domain" description="NodB homology" evidence="1">
    <location>
        <begin position="2"/>
        <end position="261"/>
    </location>
</feature>
<sequence>MKQVGLRIDVDTYRGTQYGVPSLLTVLEKHDIRASFFFSVGPDNMGRHLWRLFRPRFLWKMLRSNAASLYGWDILLAGTAWPGKKIAKDFGPLMKAAAMAGHEVGLHAWDHQGWQANVASWSQQQLTEQVQRGVDTLQQSIGQPISCSAAAGWRADERVLAVKQQFDFSYNSDCRGTHPFRPLLPNGSLGSVQIPVTLPTYDEVVGGEVQAENFNDFIIDAILRDSGVSVYTIHAEVEGMSQAAMFEQLLMRAKQQDIEFCPLSKLLPSDLQLLPVGKVIRAAFPGREGWLGCQSDIKDAE</sequence>
<keyword id="KW-0046">Antibiotic resistance</keyword>
<keyword id="KW-0378">Hydrolase</keyword>
<keyword id="KW-0441">Lipid A biosynthesis</keyword>
<keyword id="KW-0444">Lipid biosynthesis</keyword>
<keyword id="KW-0443">Lipid metabolism</keyword>
<keyword id="KW-0448">Lipopolysaccharide biosynthesis</keyword>
<reference key="1">
    <citation type="submission" date="2007-02" db="EMBL/GenBank/DDBJ databases">
        <title>Complete sequence of chromosome of Yersinia pestis Pestoides F.</title>
        <authorList>
            <consortium name="US DOE Joint Genome Institute"/>
            <person name="Copeland A."/>
            <person name="Lucas S."/>
            <person name="Lapidus A."/>
            <person name="Barry K."/>
            <person name="Detter J.C."/>
            <person name="Glavina del Rio T."/>
            <person name="Hammon N."/>
            <person name="Israni S."/>
            <person name="Dalin E."/>
            <person name="Tice H."/>
            <person name="Pitluck S."/>
            <person name="Di Bartolo G."/>
            <person name="Chain P."/>
            <person name="Malfatti S."/>
            <person name="Shin M."/>
            <person name="Vergez L."/>
            <person name="Schmutz J."/>
            <person name="Larimer F."/>
            <person name="Land M."/>
            <person name="Hauser L."/>
            <person name="Worsham P."/>
            <person name="Chu M."/>
            <person name="Bearden S."/>
            <person name="Garcia E."/>
            <person name="Richardson P."/>
        </authorList>
    </citation>
    <scope>NUCLEOTIDE SEQUENCE [LARGE SCALE GENOMIC DNA]</scope>
    <source>
        <strain>Pestoides F</strain>
    </source>
</reference>
<comment type="function">
    <text evidence="1">Catalyzes the deformylation of 4-deoxy-4-formamido-L-arabinose-phosphoundecaprenol to 4-amino-4-deoxy-L-arabinose-phosphoundecaprenol. The modified arabinose is attached to lipid A and is required for resistance to polymyxin and cationic antimicrobial peptides.</text>
</comment>
<comment type="catalytic activity">
    <reaction evidence="1">
        <text>4-deoxy-4-formamido-alpha-L-arabinopyranosyl di-trans,octa-cis-undecaprenyl phosphate + H2O = 4-amino-4-deoxy-alpha-L-arabinopyranosyl di-trans,octa-cis-undecaprenyl phosphate + formate</text>
        <dbReference type="Rhea" id="RHEA:27734"/>
        <dbReference type="ChEBI" id="CHEBI:15377"/>
        <dbReference type="ChEBI" id="CHEBI:15740"/>
        <dbReference type="ChEBI" id="CHEBI:58909"/>
        <dbReference type="ChEBI" id="CHEBI:60463"/>
        <dbReference type="EC" id="3.5.1.n3"/>
    </reaction>
</comment>
<comment type="pathway">
    <text evidence="1">Glycolipid biosynthesis; 4-amino-4-deoxy-alpha-L-arabinose undecaprenyl phosphate biosynthesis; 4-amino-4-deoxy-alpha-L-arabinose undecaprenyl phosphate from UDP-4-deoxy-4-formamido-beta-L-arabinose and undecaprenyl phosphate: step 2/2.</text>
</comment>
<comment type="pathway">
    <text evidence="1">Bacterial outer membrane biogenesis; lipopolysaccharide biosynthesis.</text>
</comment>
<comment type="similarity">
    <text evidence="1">Belongs to the polysaccharide deacetylase family. ArnD deformylase subfamily.</text>
</comment>
<accession>A4TIM5</accession>
<evidence type="ECO:0000255" key="1">
    <source>
        <dbReference type="HAMAP-Rule" id="MF_01870"/>
    </source>
</evidence>
<name>ARND_YERPP</name>
<gene>
    <name evidence="1" type="primary">arnD</name>
    <name type="ordered locus">YPDSF_0731</name>
</gene>
<proteinExistence type="inferred from homology"/>